<feature type="chain" id="PRO_0000088816" description="Phosphatidylinositol 3-kinase VPS34">
    <location>
        <begin position="1"/>
        <end position="1020"/>
    </location>
</feature>
<feature type="domain" description="C2 PI3K-type" evidence="4">
    <location>
        <begin position="49"/>
        <end position="210"/>
    </location>
</feature>
<feature type="domain" description="PIK helical" evidence="3">
    <location>
        <begin position="331"/>
        <end position="577"/>
    </location>
</feature>
<feature type="domain" description="PI3K/PI4K catalytic" evidence="2">
    <location>
        <begin position="666"/>
        <end position="1004"/>
    </location>
</feature>
<feature type="region of interest" description="G-loop" evidence="2">
    <location>
        <begin position="672"/>
        <end position="678"/>
    </location>
</feature>
<feature type="region of interest" description="Catalytic loop" evidence="2">
    <location>
        <begin position="873"/>
        <end position="881"/>
    </location>
</feature>
<feature type="region of interest" description="Activation loop" evidence="2">
    <location>
        <begin position="892"/>
        <end position="913"/>
    </location>
</feature>
<feature type="mutagenesis site" description="Lacks lipid kinase activity but retains autophosphorylation activity." evidence="7">
    <original>DPKPFP</original>
    <variation>AILREKYPERV</variation>
    <location>
        <begin position="902"/>
        <end position="907"/>
    </location>
</feature>
<reference key="1">
    <citation type="journal article" date="2000" name="Yeast">
        <title>A phosphatidylinositol 3-kinase of Candida albicans: molecular cloning and characterization.</title>
        <authorList>
            <person name="Eck R."/>
            <person name="Bruckmann A."/>
            <person name="Wetzker R."/>
            <person name="Kunkel W."/>
        </authorList>
    </citation>
    <scope>NUCLEOTIDE SEQUENCE [GENOMIC DNA]</scope>
    <scope>INDUCTION</scope>
    <scope>FUNCTION</scope>
    <scope>CATALYTIC ACTIVITY</scope>
    <source>
        <strain>3153A</strain>
    </source>
</reference>
<reference key="2">
    <citation type="journal article" date="2001" name="Yeast">
        <title>The deletion of CaVPS34 in the human pathogenic yeast Candida albicans causes defects in vesicle-mediated protein sorting and nuclear segregation.</title>
        <authorList>
            <person name="Bruckmann A."/>
            <person name="Kuenkel W."/>
            <person name="Augsten K."/>
            <person name="Wetzker R."/>
            <person name="Eck R."/>
        </authorList>
    </citation>
    <scope>FUNCTION</scope>
    <scope>DISRUPTION PHENOTYPE</scope>
</reference>
<reference key="3">
    <citation type="journal article" date="2005" name="Int. J. Med. Microbiol.">
        <title>The phosphatidylinositol 3-kinase Vps34p of the human pathogenic yeast Candida albicans is a multifunctional protein that interacts with the putative vacuolar H+ -ATPase subunit Vma7p.</title>
        <authorList>
            <person name="Eck R."/>
            <person name="Nguyen M."/>
            <person name="Guenther J."/>
            <person name="Kuenkel W."/>
            <person name="Zipfel P.F."/>
        </authorList>
    </citation>
    <scope>FUNCTION</scope>
    <scope>DISRUPTION PHENOTYPE</scope>
    <scope>INTERACTION WITH VMA7</scope>
</reference>
<reference key="4">
    <citation type="journal article" date="2005" name="Microbiology">
        <title>Generation and functional in vivo characterization of a lipid kinase defective phosphatidylinositol 3-kinase Vps34p of Candida albicans.</title>
        <authorList>
            <person name="Guenther J."/>
            <person name="Nguyen M."/>
            <person name="Haertl A."/>
            <person name="Kuenkel W."/>
            <person name="Zipfel P.F."/>
            <person name="Eck R."/>
        </authorList>
    </citation>
    <scope>FUNCTION</scope>
    <scope>CATALYTIC ACTIVITY</scope>
    <scope>PHOSPHORYLATION</scope>
    <scope>MUTAGENESIS OF 902-ASP--PRO-907</scope>
    <scope>DISRUPTION PHENOTYPE</scope>
</reference>
<evidence type="ECO:0000250" key="1">
    <source>
        <dbReference type="UniProtKB" id="P22543"/>
    </source>
</evidence>
<evidence type="ECO:0000255" key="2">
    <source>
        <dbReference type="PROSITE-ProRule" id="PRU00269"/>
    </source>
</evidence>
<evidence type="ECO:0000255" key="3">
    <source>
        <dbReference type="PROSITE-ProRule" id="PRU00878"/>
    </source>
</evidence>
<evidence type="ECO:0000255" key="4">
    <source>
        <dbReference type="PROSITE-ProRule" id="PRU00880"/>
    </source>
</evidence>
<evidence type="ECO:0000269" key="5">
    <source>
    </source>
</evidence>
<evidence type="ECO:0000269" key="6">
    <source>
    </source>
</evidence>
<evidence type="ECO:0000269" key="7">
    <source>
    </source>
</evidence>
<evidence type="ECO:0000269" key="8">
    <source>
    </source>
</evidence>
<evidence type="ECO:0000303" key="9">
    <source>
    </source>
</evidence>
<dbReference type="EC" id="2.7.1.137" evidence="5 7"/>
<dbReference type="EMBL" id="Y09043">
    <property type="protein sequence ID" value="CAA70254.1"/>
    <property type="molecule type" value="Genomic_DNA"/>
</dbReference>
<dbReference type="PIR" id="T18260">
    <property type="entry name" value="T18260"/>
</dbReference>
<dbReference type="SMR" id="Q92213"/>
<dbReference type="VEuPathDB" id="FungiDB:C1_06680W_A"/>
<dbReference type="VEuPathDB" id="FungiDB:CAWG_00745"/>
<dbReference type="BRENDA" id="2.7.1.137">
    <property type="organism ID" value="1096"/>
</dbReference>
<dbReference type="PHI-base" id="PHI:195"/>
<dbReference type="GO" id="GO:0010008">
    <property type="term" value="C:endosome membrane"/>
    <property type="evidence" value="ECO:0007669"/>
    <property type="project" value="UniProtKB-SubCell"/>
</dbReference>
<dbReference type="GO" id="GO:0000329">
    <property type="term" value="C:fungal-type vacuole membrane"/>
    <property type="evidence" value="ECO:0007669"/>
    <property type="project" value="EnsemblFungi"/>
</dbReference>
<dbReference type="GO" id="GO:0005794">
    <property type="term" value="C:Golgi apparatus"/>
    <property type="evidence" value="ECO:0007669"/>
    <property type="project" value="UniProtKB-SubCell"/>
</dbReference>
<dbReference type="GO" id="GO:0071561">
    <property type="term" value="C:nucleus-vacuole junction"/>
    <property type="evidence" value="ECO:0007669"/>
    <property type="project" value="EnsemblFungi"/>
</dbReference>
<dbReference type="GO" id="GO:0005777">
    <property type="term" value="C:peroxisome"/>
    <property type="evidence" value="ECO:0007669"/>
    <property type="project" value="EnsemblFungi"/>
</dbReference>
<dbReference type="GO" id="GO:0000407">
    <property type="term" value="C:phagophore assembly site"/>
    <property type="evidence" value="ECO:0007669"/>
    <property type="project" value="EnsemblFungi"/>
</dbReference>
<dbReference type="GO" id="GO:0034271">
    <property type="term" value="C:phosphatidylinositol 3-kinase complex, class III, type I"/>
    <property type="evidence" value="ECO:0007669"/>
    <property type="project" value="EnsemblFungi"/>
</dbReference>
<dbReference type="GO" id="GO:0034272">
    <property type="term" value="C:phosphatidylinositol 3-kinase complex, class III, type II"/>
    <property type="evidence" value="ECO:0007669"/>
    <property type="project" value="EnsemblFungi"/>
</dbReference>
<dbReference type="GO" id="GO:0016303">
    <property type="term" value="F:1-phosphatidylinositol-3-kinase activity"/>
    <property type="evidence" value="ECO:0007669"/>
    <property type="project" value="UniProtKB-EC"/>
</dbReference>
<dbReference type="GO" id="GO:0005524">
    <property type="term" value="F:ATP binding"/>
    <property type="evidence" value="ECO:0007669"/>
    <property type="project" value="UniProtKB-KW"/>
</dbReference>
<dbReference type="GO" id="GO:0004672">
    <property type="term" value="F:protein kinase activity"/>
    <property type="evidence" value="ECO:0007669"/>
    <property type="project" value="EnsemblFungi"/>
</dbReference>
<dbReference type="GO" id="GO:0032120">
    <property type="term" value="P:ascospore-type prospore membrane formation"/>
    <property type="evidence" value="ECO:0007669"/>
    <property type="project" value="EnsemblFungi"/>
</dbReference>
<dbReference type="GO" id="GO:0000045">
    <property type="term" value="P:autophagosome assembly"/>
    <property type="evidence" value="ECO:0007669"/>
    <property type="project" value="TreeGrafter"/>
</dbReference>
<dbReference type="GO" id="GO:0051365">
    <property type="term" value="P:cellular response to potassium ion starvation"/>
    <property type="evidence" value="ECO:0007669"/>
    <property type="project" value="EnsemblFungi"/>
</dbReference>
<dbReference type="GO" id="GO:0006897">
    <property type="term" value="P:endocytosis"/>
    <property type="evidence" value="ECO:0007669"/>
    <property type="project" value="TreeGrafter"/>
</dbReference>
<dbReference type="GO" id="GO:0000425">
    <property type="term" value="P:pexophagy"/>
    <property type="evidence" value="ECO:0007669"/>
    <property type="project" value="EnsemblFungi"/>
</dbReference>
<dbReference type="GO" id="GO:0048015">
    <property type="term" value="P:phosphatidylinositol-mediated signaling"/>
    <property type="evidence" value="ECO:0007669"/>
    <property type="project" value="TreeGrafter"/>
</dbReference>
<dbReference type="GO" id="GO:0032968">
    <property type="term" value="P:positive regulation of transcription elongation by RNA polymerase II"/>
    <property type="evidence" value="ECO:0007669"/>
    <property type="project" value="EnsemblFungi"/>
</dbReference>
<dbReference type="CDD" id="cd08397">
    <property type="entry name" value="C2_PI3K_class_III"/>
    <property type="match status" value="1"/>
</dbReference>
<dbReference type="CDD" id="cd00896">
    <property type="entry name" value="PI3Kc_III"/>
    <property type="match status" value="1"/>
</dbReference>
<dbReference type="FunFam" id="1.10.1070.11:FF:000002">
    <property type="entry name" value="Phosphatidylinositol 3-kinase catalytic subunit type 3"/>
    <property type="match status" value="1"/>
</dbReference>
<dbReference type="FunFam" id="3.30.1010.10:FF:000002">
    <property type="entry name" value="Phosphatidylinositol 3-kinase catalytic subunit type 3"/>
    <property type="match status" value="1"/>
</dbReference>
<dbReference type="Gene3D" id="2.60.40.150">
    <property type="entry name" value="C2 domain"/>
    <property type="match status" value="1"/>
</dbReference>
<dbReference type="Gene3D" id="1.10.1070.11">
    <property type="entry name" value="Phosphatidylinositol 3-/4-kinase, catalytic domain"/>
    <property type="match status" value="1"/>
</dbReference>
<dbReference type="Gene3D" id="3.30.1010.10">
    <property type="entry name" value="Phosphatidylinositol 3-kinase Catalytic Subunit, Chain A, domain 4"/>
    <property type="match status" value="1"/>
</dbReference>
<dbReference type="Gene3D" id="1.25.40.70">
    <property type="entry name" value="Phosphatidylinositol 3-kinase, accessory domain (PIK)"/>
    <property type="match status" value="1"/>
</dbReference>
<dbReference type="InterPro" id="IPR016024">
    <property type="entry name" value="ARM-type_fold"/>
</dbReference>
<dbReference type="InterPro" id="IPR035892">
    <property type="entry name" value="C2_domain_sf"/>
</dbReference>
<dbReference type="InterPro" id="IPR011009">
    <property type="entry name" value="Kinase-like_dom_sf"/>
</dbReference>
<dbReference type="InterPro" id="IPR000403">
    <property type="entry name" value="PI3/4_kinase_cat_dom"/>
</dbReference>
<dbReference type="InterPro" id="IPR036940">
    <property type="entry name" value="PI3/4_kinase_cat_sf"/>
</dbReference>
<dbReference type="InterPro" id="IPR018936">
    <property type="entry name" value="PI3/4_kinase_CS"/>
</dbReference>
<dbReference type="InterPro" id="IPR002420">
    <property type="entry name" value="PI3K-type_C2_dom"/>
</dbReference>
<dbReference type="InterPro" id="IPR001263">
    <property type="entry name" value="PI3K_accessory_dom"/>
</dbReference>
<dbReference type="InterPro" id="IPR042236">
    <property type="entry name" value="PI3K_accessory_sf"/>
</dbReference>
<dbReference type="InterPro" id="IPR008290">
    <property type="entry name" value="PI3K_Vps34"/>
</dbReference>
<dbReference type="InterPro" id="IPR015433">
    <property type="entry name" value="PI_Kinase"/>
</dbReference>
<dbReference type="PANTHER" id="PTHR10048:SF7">
    <property type="entry name" value="PHOSPHATIDYLINOSITOL 3-KINASE CATALYTIC SUBUNIT TYPE 3"/>
    <property type="match status" value="1"/>
</dbReference>
<dbReference type="PANTHER" id="PTHR10048">
    <property type="entry name" value="PHOSPHATIDYLINOSITOL KINASE"/>
    <property type="match status" value="1"/>
</dbReference>
<dbReference type="Pfam" id="PF00454">
    <property type="entry name" value="PI3_PI4_kinase"/>
    <property type="match status" value="1"/>
</dbReference>
<dbReference type="Pfam" id="PF00792">
    <property type="entry name" value="PI3K_C2"/>
    <property type="match status" value="1"/>
</dbReference>
<dbReference type="Pfam" id="PF00613">
    <property type="entry name" value="PI3Ka"/>
    <property type="match status" value="2"/>
</dbReference>
<dbReference type="PIRSF" id="PIRSF000587">
    <property type="entry name" value="PI3K_Vps34"/>
    <property type="match status" value="1"/>
</dbReference>
<dbReference type="SMART" id="SM00142">
    <property type="entry name" value="PI3K_C2"/>
    <property type="match status" value="1"/>
</dbReference>
<dbReference type="SMART" id="SM00145">
    <property type="entry name" value="PI3Ka"/>
    <property type="match status" value="1"/>
</dbReference>
<dbReference type="SMART" id="SM00146">
    <property type="entry name" value="PI3Kc"/>
    <property type="match status" value="1"/>
</dbReference>
<dbReference type="SUPFAM" id="SSF48371">
    <property type="entry name" value="ARM repeat"/>
    <property type="match status" value="1"/>
</dbReference>
<dbReference type="SUPFAM" id="SSF49562">
    <property type="entry name" value="C2 domain (Calcium/lipid-binding domain, CaLB)"/>
    <property type="match status" value="1"/>
</dbReference>
<dbReference type="SUPFAM" id="SSF56112">
    <property type="entry name" value="Protein kinase-like (PK-like)"/>
    <property type="match status" value="1"/>
</dbReference>
<dbReference type="PROSITE" id="PS51547">
    <property type="entry name" value="C2_PI3K"/>
    <property type="match status" value="1"/>
</dbReference>
<dbReference type="PROSITE" id="PS00915">
    <property type="entry name" value="PI3_4_KINASE_1"/>
    <property type="match status" value="1"/>
</dbReference>
<dbReference type="PROSITE" id="PS00916">
    <property type="entry name" value="PI3_4_KINASE_2"/>
    <property type="match status" value="1"/>
</dbReference>
<dbReference type="PROSITE" id="PS50290">
    <property type="entry name" value="PI3_4_KINASE_3"/>
    <property type="match status" value="1"/>
</dbReference>
<dbReference type="PROSITE" id="PS51545">
    <property type="entry name" value="PIK_HELICAL"/>
    <property type="match status" value="1"/>
</dbReference>
<organism>
    <name type="scientific">Candida albicans</name>
    <name type="common">Yeast</name>
    <dbReference type="NCBI Taxonomy" id="5476"/>
    <lineage>
        <taxon>Eukaryota</taxon>
        <taxon>Fungi</taxon>
        <taxon>Dikarya</taxon>
        <taxon>Ascomycota</taxon>
        <taxon>Saccharomycotina</taxon>
        <taxon>Pichiomycetes</taxon>
        <taxon>Debaryomycetaceae</taxon>
        <taxon>Candida/Lodderomyces clade</taxon>
        <taxon>Candida</taxon>
    </lineage>
</organism>
<protein>
    <recommendedName>
        <fullName evidence="9">Phosphatidylinositol 3-kinase VPS34</fullName>
        <shortName evidence="9">PI3-kinase VPS34</shortName>
        <shortName evidence="9">PI3K VPS34</shortName>
        <shortName evidence="9">PtdIns-3-kinase VPS34</shortName>
        <ecNumber evidence="5 7">2.7.1.137</ecNumber>
    </recommendedName>
    <alternativeName>
        <fullName evidence="9">Vacuolar protein sorting-associated protein 34</fullName>
    </alternativeName>
</protein>
<comment type="function">
    <text evidence="1 6 7 8">Multifunctional phosphatidylinositol 3-kinase involved in acidification of vacuoles, pH-dependent cell growth, and autophagocytosis (PubMed:15632428, PubMed:15861817). Plays an important role in protein transport and virulence (PubMed:11223944, PubMed:15632428). Component of the autophagy-specific VPS34 PI3-kinase complex I essential to recruit the ATG8-phosphatidylinositol conjugate and the ATG12-ATG5 conjugate to the pre-autophagosomal structure (By similarity). Also involved in endosome-to-Golgi retrograde transport as part of the VPS34 PI3-kinase complex II (By similarity). This second complex is required for the endosome-to-Golgi retrieval of PEP1 and KEX2, and the recruitment of VPS5 and VPS7, two components of the retromer complex, to endosomal membranes (probably through the synthesis of a specific pool of phosphatidylinositol 3-phosphate recruiting the retromer to the endosomes) (By similarity). Finally, it might also be involved in ethanol tolerance and cell wall integrity (By similarity).</text>
</comment>
<comment type="catalytic activity">
    <reaction evidence="5 7">
        <text>a 1,2-diacyl-sn-glycero-3-phospho-(1D-myo-inositol) + ATP = a 1,2-diacyl-sn-glycero-3-phospho-(1D-myo-inositol-3-phosphate) + ADP + H(+)</text>
        <dbReference type="Rhea" id="RHEA:12709"/>
        <dbReference type="ChEBI" id="CHEBI:15378"/>
        <dbReference type="ChEBI" id="CHEBI:30616"/>
        <dbReference type="ChEBI" id="CHEBI:57880"/>
        <dbReference type="ChEBI" id="CHEBI:58088"/>
        <dbReference type="ChEBI" id="CHEBI:456216"/>
        <dbReference type="EC" id="2.7.1.137"/>
    </reaction>
    <physiologicalReaction direction="left-to-right" evidence="5 7">
        <dbReference type="Rhea" id="RHEA:12710"/>
    </physiologicalReaction>
</comment>
<comment type="subunit">
    <text evidence="1 8">Component of the autophagy-specific VPS34 PI3-kinase complex I composed of at least VPS15, VPS30, VPS34, and of the VPS34 PI3-kinase complex II composed of VPS15, VPS30, VPS34 and VPS38 (By similarity). Interacts with VMNA7 (PubMed:15861817).</text>
</comment>
<comment type="subcellular location">
    <subcellularLocation>
        <location evidence="1">Golgi apparatus</location>
        <location evidence="1">trans-Golgi network membrane</location>
        <topology evidence="1">Peripheral membrane protein</topology>
    </subcellularLocation>
    <subcellularLocation>
        <location evidence="1">Endosome membrane</location>
        <topology evidence="1">Peripheral membrane protein</topology>
    </subcellularLocation>
</comment>
<comment type="induction">
    <text evidence="5">Expression is increased up to 12-fold during exponential growth, followed by a decline upon entry into stationary phase.</text>
</comment>
<comment type="PTM">
    <text evidence="7">Autophosphorylated.</text>
</comment>
<comment type="disruption phenotype">
    <text evidence="6 7 8">Leads to defective acidification of the vacuoles and a lack of growth at pH 8.0 (PubMed:15861817). Vacuoles are considerably enlarged and electron-transparent (PubMed:11223944). Shows aberrant patch-like accumulation of vesicles, which are localized in the periplasm close to the plasma membrane (PubMed:11223944). Shows a staining of punctuate structures, possibly multivesicular bodies (MVB), that are scattered all over the cell, the result of a late block in endocytic vesicle transport (PubMed:11223944). Results in significantly lower carboxypeptidase Y activity (PubMed:11223944). Causes disturbance of normal nuclear migration (PubMed:11223944). Also leads to avirulence in mice (PubMed:15632428).</text>
</comment>
<comment type="similarity">
    <text evidence="4">Belongs to the PI3/PI4-kinase family.</text>
</comment>
<sequence>MATLSQPQSALPKTKIATTFGLSKDLKSPISVKVCYLECTRNNVSLVPLSTKFEDPTVFKKLSQIYKNSDLFVEIRVYDGKNNNLISTPVRTSYKAFNNKGRTWNQQLKLNIDYNQISIDAYLKFSICEIIDTKPSVFGVSYLSLFSHDSSTLRSGSHKIPVFMEDDPQYSKNIQYGTLIGLTDLEKRLIDYENGKYPRLNWLDKMVLPKVDATFLKTNNKDHDYYLYIELPQFEFPIVYSDIIYQIPTIEPITETTSKIPPDDTLNSNIIINSIDIPMATSHDPSIMKVYDPDFHITANNHLNPNATTFDPVELKYRKLERNIDNNTILDKELKPTPQLRDELLRIMIKPSNAESTDNEKNLIWKFRYYFSKNNSGNDPSNKSVKSFLPKFLRSINWENDYELDHTFKEIIPFYWNVDKLQIGDALELLGDYFNPYTLGKPTYQDDSMTSKSSKMKSDEKRFIKIYNNVCFLRKLAVERLKLANSEELLLYLLQLVQALKYEALIYEKSPPFCERSDQIEDNASSTLKSPLADFLIERAVENEKLGNFFYWYVKVENEDQLNNPHIDGPIKIYMDILNRYIELLKAHCHENRLPYYKHLKHQIWFIKKLTSLVELLRASFKKNEATAKKVEYLREYLANSGNELLKFPEPFPLPLDPSVMICGCYPEESSVFKSSLAPLKITLKTIEKKKHGHATSQLFGKRSRYGKYPLMFKIGDDLRQDQLVIQIIDLMDQLLKNENLDLKLTPYKILATSPISGLIQFVPNETLDSILSKTYPTSVTYSGGGETSDGPPSVSNNGILNYLRLHSQEQQSEEPISKSILSTNTSQSNTEIPVLPRQPKPTITSDLGVSPILMDNYVKSCAGYCVITYILGVGDRHLDNLLLSPNGKFWHADFGYILGRDPKPFPPLMKLPIQVIDGMGGLHHENYNVFKSYCFITYTTLRKNSNLILNLFQLMLDANIPDIQFDPSRVIEKVQEKFCLQMTEEEAILHFQNLINDSVNAFLPVVIDRLHSLAQYWRA</sequence>
<proteinExistence type="evidence at protein level"/>
<accession>Q92213</accession>
<gene>
    <name evidence="9" type="primary">VPS34</name>
</gene>
<keyword id="KW-0067">ATP-binding</keyword>
<keyword id="KW-0967">Endosome</keyword>
<keyword id="KW-0333">Golgi apparatus</keyword>
<keyword id="KW-0418">Kinase</keyword>
<keyword id="KW-0472">Membrane</keyword>
<keyword id="KW-0547">Nucleotide-binding</keyword>
<keyword id="KW-0808">Transferase</keyword>
<name>VPS34_CANAX</name>